<name>CYSI_SHEDO</name>
<keyword id="KW-0004">4Fe-4S</keyword>
<keyword id="KW-0028">Amino-acid biosynthesis</keyword>
<keyword id="KW-0198">Cysteine biosynthesis</keyword>
<keyword id="KW-0349">Heme</keyword>
<keyword id="KW-0408">Iron</keyword>
<keyword id="KW-0411">Iron-sulfur</keyword>
<keyword id="KW-0479">Metal-binding</keyword>
<keyword id="KW-0521">NADP</keyword>
<keyword id="KW-0560">Oxidoreductase</keyword>
<keyword id="KW-1185">Reference proteome</keyword>
<sequence>MSEQKLAVNEYLKTDSDYLRGTIQEGLDTQVTGSFSDGDQQLIKFHGFYQQDDRDLRNERKEQKLEPLYSFMLRARVPGGICTPAQWLDVDKISSTLTTSNSIRLTTRQTFQYHGIPKRNLKTLIQGLDKAALDSIAACGDVNRNVMCNPNPVESKLHAQAYAVAKELSDHLLPHTRAYAEIWLDEEKLVGETVEPVYGNTYLPRKFKMAVSVPPDNDVDVYTNDLGFIAIAEDGQLVGFNLVAGGGMGSTHGEVETFPRLADDFGFIKTADVIKFAEAVMTVQRDWGNRVVRKRARLKYTIVDHGFDAFKAEVENRAGVKFAPKRDVVIGDRGDRYGWVEGIDSKWHLTLFIESGRIKDLPGQTLQTGLREIAKIHKGDFRMTSNQNMIIAGVAAEDKAEIEGLARKHGLMGQVLTGTRGHSIACVALPTCPLAMAEAERYFPEFIDHIDALQAKHGISDQSIVVRMTGCPNGCARPFAAEIGLVGKAPGRYNLYLGANFEGTRLNKMHKENIQEAEILAELDTLFGRYATERDAGETFGNFTVRIGVVKAVNDAAKDFHG</sequence>
<evidence type="ECO:0000255" key="1">
    <source>
        <dbReference type="HAMAP-Rule" id="MF_01540"/>
    </source>
</evidence>
<dbReference type="EC" id="1.8.1.2" evidence="1"/>
<dbReference type="EMBL" id="CP000302">
    <property type="protein sequence ID" value="ABE54221.1"/>
    <property type="molecule type" value="Genomic_DNA"/>
</dbReference>
<dbReference type="RefSeq" id="WP_011495385.1">
    <property type="nucleotide sequence ID" value="NC_007954.1"/>
</dbReference>
<dbReference type="SMR" id="Q12QQ5"/>
<dbReference type="STRING" id="318161.Sden_0933"/>
<dbReference type="KEGG" id="sdn:Sden_0933"/>
<dbReference type="eggNOG" id="COG0155">
    <property type="taxonomic scope" value="Bacteria"/>
</dbReference>
<dbReference type="HOGENOM" id="CLU_001975_3_2_6"/>
<dbReference type="OrthoDB" id="3189055at2"/>
<dbReference type="UniPathway" id="UPA00140">
    <property type="reaction ID" value="UER00207"/>
</dbReference>
<dbReference type="Proteomes" id="UP000001982">
    <property type="component" value="Chromosome"/>
</dbReference>
<dbReference type="GO" id="GO:0009337">
    <property type="term" value="C:sulfite reductase complex (NADPH)"/>
    <property type="evidence" value="ECO:0007669"/>
    <property type="project" value="InterPro"/>
</dbReference>
<dbReference type="GO" id="GO:0051539">
    <property type="term" value="F:4 iron, 4 sulfur cluster binding"/>
    <property type="evidence" value="ECO:0007669"/>
    <property type="project" value="UniProtKB-KW"/>
</dbReference>
<dbReference type="GO" id="GO:0020037">
    <property type="term" value="F:heme binding"/>
    <property type="evidence" value="ECO:0007669"/>
    <property type="project" value="InterPro"/>
</dbReference>
<dbReference type="GO" id="GO:0046872">
    <property type="term" value="F:metal ion binding"/>
    <property type="evidence" value="ECO:0007669"/>
    <property type="project" value="UniProtKB-KW"/>
</dbReference>
<dbReference type="GO" id="GO:0050661">
    <property type="term" value="F:NADP binding"/>
    <property type="evidence" value="ECO:0007669"/>
    <property type="project" value="InterPro"/>
</dbReference>
<dbReference type="GO" id="GO:0050311">
    <property type="term" value="F:sulfite reductase (ferredoxin) activity"/>
    <property type="evidence" value="ECO:0007669"/>
    <property type="project" value="TreeGrafter"/>
</dbReference>
<dbReference type="GO" id="GO:0004783">
    <property type="term" value="F:sulfite reductase (NADPH) activity"/>
    <property type="evidence" value="ECO:0007669"/>
    <property type="project" value="UniProtKB-UniRule"/>
</dbReference>
<dbReference type="GO" id="GO:0019344">
    <property type="term" value="P:cysteine biosynthetic process"/>
    <property type="evidence" value="ECO:0007669"/>
    <property type="project" value="UniProtKB-KW"/>
</dbReference>
<dbReference type="GO" id="GO:0070814">
    <property type="term" value="P:hydrogen sulfide biosynthetic process"/>
    <property type="evidence" value="ECO:0007669"/>
    <property type="project" value="UniProtKB-UniRule"/>
</dbReference>
<dbReference type="GO" id="GO:0000103">
    <property type="term" value="P:sulfate assimilation"/>
    <property type="evidence" value="ECO:0007669"/>
    <property type="project" value="UniProtKB-UniRule"/>
</dbReference>
<dbReference type="FunFam" id="3.30.413.10:FF:000003">
    <property type="entry name" value="Sulfite reductase [NADPH] hemoprotein beta-component"/>
    <property type="match status" value="1"/>
</dbReference>
<dbReference type="FunFam" id="3.30.413.10:FF:000004">
    <property type="entry name" value="Sulfite reductase [NADPH] hemoprotein beta-component"/>
    <property type="match status" value="1"/>
</dbReference>
<dbReference type="Gene3D" id="3.30.413.10">
    <property type="entry name" value="Sulfite Reductase Hemoprotein, domain 1"/>
    <property type="match status" value="2"/>
</dbReference>
<dbReference type="HAMAP" id="MF_01540">
    <property type="entry name" value="CysI"/>
    <property type="match status" value="1"/>
</dbReference>
<dbReference type="InterPro" id="IPR011786">
    <property type="entry name" value="CysI"/>
</dbReference>
<dbReference type="InterPro" id="IPR005117">
    <property type="entry name" value="NiRdtase/SiRdtase_haem-b_fer"/>
</dbReference>
<dbReference type="InterPro" id="IPR036136">
    <property type="entry name" value="Nit/Sulf_reduc_fer-like_dom_sf"/>
</dbReference>
<dbReference type="InterPro" id="IPR006067">
    <property type="entry name" value="NO2/SO3_Rdtase_4Fe4S_dom"/>
</dbReference>
<dbReference type="InterPro" id="IPR045169">
    <property type="entry name" value="NO2/SO3_Rdtase_4Fe4S_prot"/>
</dbReference>
<dbReference type="InterPro" id="IPR045854">
    <property type="entry name" value="NO2/SO3_Rdtase_4Fe4S_sf"/>
</dbReference>
<dbReference type="InterPro" id="IPR006066">
    <property type="entry name" value="NO2/SO3_Rdtase_FeS/sirohaem_BS"/>
</dbReference>
<dbReference type="NCBIfam" id="TIGR02041">
    <property type="entry name" value="CysI"/>
    <property type="match status" value="1"/>
</dbReference>
<dbReference type="NCBIfam" id="NF010029">
    <property type="entry name" value="PRK13504.1"/>
    <property type="match status" value="1"/>
</dbReference>
<dbReference type="PANTHER" id="PTHR11493:SF47">
    <property type="entry name" value="SULFITE REDUCTASE [NADPH] SUBUNIT BETA"/>
    <property type="match status" value="1"/>
</dbReference>
<dbReference type="PANTHER" id="PTHR11493">
    <property type="entry name" value="SULFITE REDUCTASE [NADPH] SUBUNIT BETA-RELATED"/>
    <property type="match status" value="1"/>
</dbReference>
<dbReference type="Pfam" id="PF01077">
    <property type="entry name" value="NIR_SIR"/>
    <property type="match status" value="1"/>
</dbReference>
<dbReference type="Pfam" id="PF03460">
    <property type="entry name" value="NIR_SIR_ferr"/>
    <property type="match status" value="2"/>
</dbReference>
<dbReference type="PRINTS" id="PR00397">
    <property type="entry name" value="SIROHAEM"/>
</dbReference>
<dbReference type="SUPFAM" id="SSF56014">
    <property type="entry name" value="Nitrite and sulphite reductase 4Fe-4S domain-like"/>
    <property type="match status" value="2"/>
</dbReference>
<dbReference type="SUPFAM" id="SSF55124">
    <property type="entry name" value="Nitrite/Sulfite reductase N-terminal domain-like"/>
    <property type="match status" value="2"/>
</dbReference>
<dbReference type="PROSITE" id="PS00365">
    <property type="entry name" value="NIR_SIR"/>
    <property type="match status" value="1"/>
</dbReference>
<comment type="function">
    <text evidence="1">Component of the sulfite reductase complex that catalyzes the 6-electron reduction of sulfite to sulfide. This is one of several activities required for the biosynthesis of L-cysteine from sulfate.</text>
</comment>
<comment type="catalytic activity">
    <reaction evidence="1">
        <text>hydrogen sulfide + 3 NADP(+) + 3 H2O = sulfite + 3 NADPH + 4 H(+)</text>
        <dbReference type="Rhea" id="RHEA:13801"/>
        <dbReference type="ChEBI" id="CHEBI:15377"/>
        <dbReference type="ChEBI" id="CHEBI:15378"/>
        <dbReference type="ChEBI" id="CHEBI:17359"/>
        <dbReference type="ChEBI" id="CHEBI:29919"/>
        <dbReference type="ChEBI" id="CHEBI:57783"/>
        <dbReference type="ChEBI" id="CHEBI:58349"/>
        <dbReference type="EC" id="1.8.1.2"/>
    </reaction>
</comment>
<comment type="cofactor">
    <cofactor evidence="1">
        <name>siroheme</name>
        <dbReference type="ChEBI" id="CHEBI:60052"/>
    </cofactor>
    <text evidence="1">Binds 1 siroheme per subunit.</text>
</comment>
<comment type="cofactor">
    <cofactor evidence="1">
        <name>[4Fe-4S] cluster</name>
        <dbReference type="ChEBI" id="CHEBI:49883"/>
    </cofactor>
    <text evidence="1">Binds 1 [4Fe-4S] cluster per subunit.</text>
</comment>
<comment type="pathway">
    <text evidence="1">Sulfur metabolism; hydrogen sulfide biosynthesis; hydrogen sulfide from sulfite (NADPH route): step 1/1.</text>
</comment>
<comment type="subunit">
    <text evidence="1">Alpha(8)-beta(8). The alpha component is a flavoprotein, the beta component is a hemoprotein.</text>
</comment>
<comment type="similarity">
    <text evidence="1">Belongs to the nitrite and sulfite reductase 4Fe-4S domain family.</text>
</comment>
<organism>
    <name type="scientific">Shewanella denitrificans (strain OS217 / ATCC BAA-1090 / DSM 15013)</name>
    <dbReference type="NCBI Taxonomy" id="318161"/>
    <lineage>
        <taxon>Bacteria</taxon>
        <taxon>Pseudomonadati</taxon>
        <taxon>Pseudomonadota</taxon>
        <taxon>Gammaproteobacteria</taxon>
        <taxon>Alteromonadales</taxon>
        <taxon>Shewanellaceae</taxon>
        <taxon>Shewanella</taxon>
    </lineage>
</organism>
<reference key="1">
    <citation type="submission" date="2006-03" db="EMBL/GenBank/DDBJ databases">
        <title>Complete sequence of Shewanella denitrificans OS217.</title>
        <authorList>
            <consortium name="US DOE Joint Genome Institute"/>
            <person name="Copeland A."/>
            <person name="Lucas S."/>
            <person name="Lapidus A."/>
            <person name="Barry K."/>
            <person name="Detter J.C."/>
            <person name="Glavina del Rio T."/>
            <person name="Hammon N."/>
            <person name="Israni S."/>
            <person name="Dalin E."/>
            <person name="Tice H."/>
            <person name="Pitluck S."/>
            <person name="Brettin T."/>
            <person name="Bruce D."/>
            <person name="Han C."/>
            <person name="Tapia R."/>
            <person name="Gilna P."/>
            <person name="Kiss H."/>
            <person name="Schmutz J."/>
            <person name="Larimer F."/>
            <person name="Land M."/>
            <person name="Hauser L."/>
            <person name="Kyrpides N."/>
            <person name="Lykidis A."/>
            <person name="Richardson P."/>
        </authorList>
    </citation>
    <scope>NUCLEOTIDE SEQUENCE [LARGE SCALE GENOMIC DNA]</scope>
    <source>
        <strain>OS217 / ATCC BAA-1090 / DSM 15013</strain>
    </source>
</reference>
<feature type="chain" id="PRO_0000292963" description="Sulfite reductase [NADPH] hemoprotein beta-component">
    <location>
        <begin position="1"/>
        <end position="562"/>
    </location>
</feature>
<feature type="binding site" evidence="1">
    <location>
        <position position="426"/>
    </location>
    <ligand>
        <name>[4Fe-4S] cluster</name>
        <dbReference type="ChEBI" id="CHEBI:49883"/>
    </ligand>
</feature>
<feature type="binding site" evidence="1">
    <location>
        <position position="432"/>
    </location>
    <ligand>
        <name>[4Fe-4S] cluster</name>
        <dbReference type="ChEBI" id="CHEBI:49883"/>
    </ligand>
</feature>
<feature type="binding site" evidence="1">
    <location>
        <position position="471"/>
    </location>
    <ligand>
        <name>[4Fe-4S] cluster</name>
        <dbReference type="ChEBI" id="CHEBI:49883"/>
    </ligand>
</feature>
<feature type="binding site" evidence="1">
    <location>
        <position position="475"/>
    </location>
    <ligand>
        <name>[4Fe-4S] cluster</name>
        <dbReference type="ChEBI" id="CHEBI:49883"/>
    </ligand>
</feature>
<feature type="binding site" description="axial binding residue" evidence="1">
    <location>
        <position position="475"/>
    </location>
    <ligand>
        <name>siroheme</name>
        <dbReference type="ChEBI" id="CHEBI:60052"/>
    </ligand>
    <ligandPart>
        <name>Fe</name>
        <dbReference type="ChEBI" id="CHEBI:18248"/>
    </ligandPart>
</feature>
<accession>Q12QQ5</accession>
<protein>
    <recommendedName>
        <fullName evidence="1">Sulfite reductase [NADPH] hemoprotein beta-component</fullName>
        <shortName evidence="1">SiR-HP</shortName>
        <shortName evidence="1">SiRHP</shortName>
        <ecNumber evidence="1">1.8.1.2</ecNumber>
    </recommendedName>
</protein>
<gene>
    <name evidence="1" type="primary">cysI</name>
    <name type="ordered locus">Sden_0933</name>
</gene>
<proteinExistence type="inferred from homology"/>